<keyword id="KW-0025">Alternative splicing</keyword>
<keyword id="KW-0963">Cytoplasm</keyword>
<keyword id="KW-0274">FAD</keyword>
<keyword id="KW-0285">Flavoprotein</keyword>
<keyword id="KW-0520">NAD</keyword>
<keyword id="KW-0521">NADP</keyword>
<keyword id="KW-0560">Oxidoreductase</keyword>
<keyword id="KW-0597">Phosphoprotein</keyword>
<keyword id="KW-0676">Redox-active center</keyword>
<keyword id="KW-1185">Reference proteome</keyword>
<dbReference type="EC" id="1.6.5.4" evidence="8"/>
<dbReference type="EMBL" id="AC010927">
    <property type="protein sequence ID" value="AAF04429.1"/>
    <property type="molecule type" value="Genomic_DNA"/>
</dbReference>
<dbReference type="EMBL" id="CP002686">
    <property type="protein sequence ID" value="AEE74838.1"/>
    <property type="molecule type" value="Genomic_DNA"/>
</dbReference>
<dbReference type="EMBL" id="AY093765">
    <property type="protein sequence ID" value="AAM10387.1"/>
    <property type="molecule type" value="mRNA"/>
</dbReference>
<dbReference type="EMBL" id="BT001054">
    <property type="protein sequence ID" value="AAN46808.1"/>
    <property type="molecule type" value="mRNA"/>
</dbReference>
<dbReference type="EMBL" id="AY084556">
    <property type="protein sequence ID" value="AAM61123.1"/>
    <property type="molecule type" value="mRNA"/>
</dbReference>
<dbReference type="RefSeq" id="NP_566361.1">
    <molecule id="Q9SR59-1"/>
    <property type="nucleotide sequence ID" value="NM_111829.4"/>
</dbReference>
<dbReference type="SMR" id="Q9SR59"/>
<dbReference type="BioGRID" id="5489">
    <property type="interactions" value="14"/>
</dbReference>
<dbReference type="FunCoup" id="Q9SR59">
    <property type="interactions" value="569"/>
</dbReference>
<dbReference type="STRING" id="3702.Q9SR59"/>
<dbReference type="iPTMnet" id="Q9SR59"/>
<dbReference type="PaxDb" id="3702-AT3G09940.1"/>
<dbReference type="ProteomicsDB" id="239047">
    <molecule id="Q9SR59-1"/>
</dbReference>
<dbReference type="EnsemblPlants" id="AT3G09940.1">
    <molecule id="Q9SR59-1"/>
    <property type="protein sequence ID" value="AT3G09940.1"/>
    <property type="gene ID" value="AT3G09940"/>
</dbReference>
<dbReference type="GeneID" id="820155"/>
<dbReference type="Gramene" id="AT3G09940.1">
    <molecule id="Q9SR59-1"/>
    <property type="protein sequence ID" value="AT3G09940.1"/>
    <property type="gene ID" value="AT3G09940"/>
</dbReference>
<dbReference type="KEGG" id="ath:AT3G09940"/>
<dbReference type="Araport" id="AT3G09940"/>
<dbReference type="TAIR" id="AT3G09940">
    <property type="gene designation" value="MDAR3"/>
</dbReference>
<dbReference type="eggNOG" id="KOG1336">
    <property type="taxonomic scope" value="Eukaryota"/>
</dbReference>
<dbReference type="HOGENOM" id="CLU_003291_4_1_1"/>
<dbReference type="InParanoid" id="Q9SR59"/>
<dbReference type="OMA" id="RSEHWNG"/>
<dbReference type="OrthoDB" id="6029at2759"/>
<dbReference type="PhylomeDB" id="Q9SR59"/>
<dbReference type="BioCyc" id="ARA:AT3G09940-MONOMER"/>
<dbReference type="BRENDA" id="1.6.5.4">
    <property type="organism ID" value="399"/>
</dbReference>
<dbReference type="PRO" id="PR:Q9SR59"/>
<dbReference type="Proteomes" id="UP000006548">
    <property type="component" value="Chromosome 3"/>
</dbReference>
<dbReference type="ExpressionAtlas" id="Q9SR59">
    <property type="expression patterns" value="baseline and differential"/>
</dbReference>
<dbReference type="GO" id="GO:0005829">
    <property type="term" value="C:cytosol"/>
    <property type="evidence" value="ECO:0000314"/>
    <property type="project" value="TAIR"/>
</dbReference>
<dbReference type="GO" id="GO:0016656">
    <property type="term" value="F:monodehydroascorbate reductase (NADH) activity"/>
    <property type="evidence" value="ECO:0000250"/>
    <property type="project" value="TAIR"/>
</dbReference>
<dbReference type="GO" id="GO:0043903">
    <property type="term" value="P:regulation of biological process involved in symbiotic interaction"/>
    <property type="evidence" value="ECO:0000315"/>
    <property type="project" value="TAIR"/>
</dbReference>
<dbReference type="GO" id="GO:0009753">
    <property type="term" value="P:response to jasmonic acid"/>
    <property type="evidence" value="ECO:0000270"/>
    <property type="project" value="TAIR"/>
</dbReference>
<dbReference type="GO" id="GO:0009610">
    <property type="term" value="P:response to symbiotic fungus"/>
    <property type="evidence" value="ECO:0000270"/>
    <property type="project" value="TAIR"/>
</dbReference>
<dbReference type="GO" id="GO:0009414">
    <property type="term" value="P:response to water deprivation"/>
    <property type="evidence" value="ECO:0000270"/>
    <property type="project" value="TAIR"/>
</dbReference>
<dbReference type="FunFam" id="3.30.390.30:FF:000013">
    <property type="entry name" value="Monodehydroascorbate reductase 3"/>
    <property type="match status" value="1"/>
</dbReference>
<dbReference type="Gene3D" id="3.30.390.30">
    <property type="match status" value="1"/>
</dbReference>
<dbReference type="Gene3D" id="3.50.50.60">
    <property type="entry name" value="FAD/NAD(P)-binding domain"/>
    <property type="match status" value="2"/>
</dbReference>
<dbReference type="InterPro" id="IPR050446">
    <property type="entry name" value="FAD-oxidoreductase/Apoptosis"/>
</dbReference>
<dbReference type="InterPro" id="IPR036188">
    <property type="entry name" value="FAD/NAD-bd_sf"/>
</dbReference>
<dbReference type="InterPro" id="IPR023753">
    <property type="entry name" value="FAD/NAD-binding_dom"/>
</dbReference>
<dbReference type="InterPro" id="IPR016156">
    <property type="entry name" value="FAD/NAD-linked_Rdtase_dimer_sf"/>
</dbReference>
<dbReference type="InterPro" id="IPR048618">
    <property type="entry name" value="MDHAR3-like_C"/>
</dbReference>
<dbReference type="PANTHER" id="PTHR43557">
    <property type="entry name" value="APOPTOSIS-INDUCING FACTOR 1"/>
    <property type="match status" value="1"/>
</dbReference>
<dbReference type="PANTHER" id="PTHR43557:SF13">
    <property type="entry name" value="MONODEHYDROASCORBATE REDUCTASE 2-RELATED"/>
    <property type="match status" value="1"/>
</dbReference>
<dbReference type="Pfam" id="PF21791">
    <property type="entry name" value="MDHAR3-like_C"/>
    <property type="match status" value="1"/>
</dbReference>
<dbReference type="Pfam" id="PF07992">
    <property type="entry name" value="Pyr_redox_2"/>
    <property type="match status" value="1"/>
</dbReference>
<dbReference type="PRINTS" id="PR00368">
    <property type="entry name" value="FADPNR"/>
</dbReference>
<dbReference type="PRINTS" id="PR00411">
    <property type="entry name" value="PNDRDTASEI"/>
</dbReference>
<dbReference type="SUPFAM" id="SSF51905">
    <property type="entry name" value="FAD/NAD(P)-binding domain"/>
    <property type="match status" value="1"/>
</dbReference>
<dbReference type="SUPFAM" id="SSF55424">
    <property type="entry name" value="FAD/NAD-linked reductases, dimerisation (C-terminal) domain"/>
    <property type="match status" value="1"/>
</dbReference>
<reference key="1">
    <citation type="journal article" date="2000" name="Nature">
        <title>Sequence and analysis of chromosome 3 of the plant Arabidopsis thaliana.</title>
        <authorList>
            <person name="Salanoubat M."/>
            <person name="Lemcke K."/>
            <person name="Rieger M."/>
            <person name="Ansorge W."/>
            <person name="Unseld M."/>
            <person name="Fartmann B."/>
            <person name="Valle G."/>
            <person name="Bloecker H."/>
            <person name="Perez-Alonso M."/>
            <person name="Obermaier B."/>
            <person name="Delseny M."/>
            <person name="Boutry M."/>
            <person name="Grivell L.A."/>
            <person name="Mache R."/>
            <person name="Puigdomenech P."/>
            <person name="De Simone V."/>
            <person name="Choisne N."/>
            <person name="Artiguenave F."/>
            <person name="Robert C."/>
            <person name="Brottier P."/>
            <person name="Wincker P."/>
            <person name="Cattolico L."/>
            <person name="Weissenbach J."/>
            <person name="Saurin W."/>
            <person name="Quetier F."/>
            <person name="Schaefer M."/>
            <person name="Mueller-Auer S."/>
            <person name="Gabel C."/>
            <person name="Fuchs M."/>
            <person name="Benes V."/>
            <person name="Wurmbach E."/>
            <person name="Drzonek H."/>
            <person name="Erfle H."/>
            <person name="Jordan N."/>
            <person name="Bangert S."/>
            <person name="Wiedelmann R."/>
            <person name="Kranz H."/>
            <person name="Voss H."/>
            <person name="Holland R."/>
            <person name="Brandt P."/>
            <person name="Nyakatura G."/>
            <person name="Vezzi A."/>
            <person name="D'Angelo M."/>
            <person name="Pallavicini A."/>
            <person name="Toppo S."/>
            <person name="Simionati B."/>
            <person name="Conrad A."/>
            <person name="Hornischer K."/>
            <person name="Kauer G."/>
            <person name="Loehnert T.-H."/>
            <person name="Nordsiek G."/>
            <person name="Reichelt J."/>
            <person name="Scharfe M."/>
            <person name="Schoen O."/>
            <person name="Bargues M."/>
            <person name="Terol J."/>
            <person name="Climent J."/>
            <person name="Navarro P."/>
            <person name="Collado C."/>
            <person name="Perez-Perez A."/>
            <person name="Ottenwaelder B."/>
            <person name="Duchemin D."/>
            <person name="Cooke R."/>
            <person name="Laudie M."/>
            <person name="Berger-Llauro C."/>
            <person name="Purnelle B."/>
            <person name="Masuy D."/>
            <person name="de Haan M."/>
            <person name="Maarse A.C."/>
            <person name="Alcaraz J.-P."/>
            <person name="Cottet A."/>
            <person name="Casacuberta E."/>
            <person name="Monfort A."/>
            <person name="Argiriou A."/>
            <person name="Flores M."/>
            <person name="Liguori R."/>
            <person name="Vitale D."/>
            <person name="Mannhaupt G."/>
            <person name="Haase D."/>
            <person name="Schoof H."/>
            <person name="Rudd S."/>
            <person name="Zaccaria P."/>
            <person name="Mewes H.-W."/>
            <person name="Mayer K.F.X."/>
            <person name="Kaul S."/>
            <person name="Town C.D."/>
            <person name="Koo H.L."/>
            <person name="Tallon L.J."/>
            <person name="Jenkins J."/>
            <person name="Rooney T."/>
            <person name="Rizzo M."/>
            <person name="Walts A."/>
            <person name="Utterback T."/>
            <person name="Fujii C.Y."/>
            <person name="Shea T.P."/>
            <person name="Creasy T.H."/>
            <person name="Haas B."/>
            <person name="Maiti R."/>
            <person name="Wu D."/>
            <person name="Peterson J."/>
            <person name="Van Aken S."/>
            <person name="Pai G."/>
            <person name="Militscher J."/>
            <person name="Sellers P."/>
            <person name="Gill J.E."/>
            <person name="Feldblyum T.V."/>
            <person name="Preuss D."/>
            <person name="Lin X."/>
            <person name="Nierman W.C."/>
            <person name="Salzberg S.L."/>
            <person name="White O."/>
            <person name="Venter J.C."/>
            <person name="Fraser C.M."/>
            <person name="Kaneko T."/>
            <person name="Nakamura Y."/>
            <person name="Sato S."/>
            <person name="Kato T."/>
            <person name="Asamizu E."/>
            <person name="Sasamoto S."/>
            <person name="Kimura T."/>
            <person name="Idesawa K."/>
            <person name="Kawashima K."/>
            <person name="Kishida Y."/>
            <person name="Kiyokawa C."/>
            <person name="Kohara M."/>
            <person name="Matsumoto M."/>
            <person name="Matsuno A."/>
            <person name="Muraki A."/>
            <person name="Nakayama S."/>
            <person name="Nakazaki N."/>
            <person name="Shinpo S."/>
            <person name="Takeuchi C."/>
            <person name="Wada T."/>
            <person name="Watanabe A."/>
            <person name="Yamada M."/>
            <person name="Yasuda M."/>
            <person name="Tabata S."/>
        </authorList>
    </citation>
    <scope>NUCLEOTIDE SEQUENCE [LARGE SCALE GENOMIC DNA]</scope>
    <source>
        <strain>cv. Columbia</strain>
    </source>
</reference>
<reference key="2">
    <citation type="journal article" date="2017" name="Plant J.">
        <title>Araport11: a complete reannotation of the Arabidopsis thaliana reference genome.</title>
        <authorList>
            <person name="Cheng C.Y."/>
            <person name="Krishnakumar V."/>
            <person name="Chan A.P."/>
            <person name="Thibaud-Nissen F."/>
            <person name="Schobel S."/>
            <person name="Town C.D."/>
        </authorList>
    </citation>
    <scope>GENOME REANNOTATION</scope>
    <source>
        <strain>cv. Columbia</strain>
    </source>
</reference>
<reference key="3">
    <citation type="journal article" date="2003" name="Science">
        <title>Empirical analysis of transcriptional activity in the Arabidopsis genome.</title>
        <authorList>
            <person name="Yamada K."/>
            <person name="Lim J."/>
            <person name="Dale J.M."/>
            <person name="Chen H."/>
            <person name="Shinn P."/>
            <person name="Palm C.J."/>
            <person name="Southwick A.M."/>
            <person name="Wu H.C."/>
            <person name="Kim C.J."/>
            <person name="Nguyen M."/>
            <person name="Pham P.K."/>
            <person name="Cheuk R.F."/>
            <person name="Karlin-Newmann G."/>
            <person name="Liu S.X."/>
            <person name="Lam B."/>
            <person name="Sakano H."/>
            <person name="Wu T."/>
            <person name="Yu G."/>
            <person name="Miranda M."/>
            <person name="Quach H.L."/>
            <person name="Tripp M."/>
            <person name="Chang C.H."/>
            <person name="Lee J.M."/>
            <person name="Toriumi M.J."/>
            <person name="Chan M.M."/>
            <person name="Tang C.C."/>
            <person name="Onodera C.S."/>
            <person name="Deng J.M."/>
            <person name="Akiyama K."/>
            <person name="Ansari Y."/>
            <person name="Arakawa T."/>
            <person name="Banh J."/>
            <person name="Banno F."/>
            <person name="Bowser L."/>
            <person name="Brooks S.Y."/>
            <person name="Carninci P."/>
            <person name="Chao Q."/>
            <person name="Choy N."/>
            <person name="Enju A."/>
            <person name="Goldsmith A.D."/>
            <person name="Gurjal M."/>
            <person name="Hansen N.F."/>
            <person name="Hayashizaki Y."/>
            <person name="Johnson-Hopson C."/>
            <person name="Hsuan V.W."/>
            <person name="Iida K."/>
            <person name="Karnes M."/>
            <person name="Khan S."/>
            <person name="Koesema E."/>
            <person name="Ishida J."/>
            <person name="Jiang P.X."/>
            <person name="Jones T."/>
            <person name="Kawai J."/>
            <person name="Kamiya A."/>
            <person name="Meyers C."/>
            <person name="Nakajima M."/>
            <person name="Narusaka M."/>
            <person name="Seki M."/>
            <person name="Sakurai T."/>
            <person name="Satou M."/>
            <person name="Tamse R."/>
            <person name="Vaysberg M."/>
            <person name="Wallender E.K."/>
            <person name="Wong C."/>
            <person name="Yamamura Y."/>
            <person name="Yuan S."/>
            <person name="Shinozaki K."/>
            <person name="Davis R.W."/>
            <person name="Theologis A."/>
            <person name="Ecker J.R."/>
        </authorList>
    </citation>
    <scope>NUCLEOTIDE SEQUENCE [LARGE SCALE MRNA]</scope>
    <source>
        <strain>cv. Columbia</strain>
    </source>
</reference>
<reference key="4">
    <citation type="submission" date="2002-03" db="EMBL/GenBank/DDBJ databases">
        <title>Full-length cDNA from Arabidopsis thaliana.</title>
        <authorList>
            <person name="Brover V.V."/>
            <person name="Troukhan M.E."/>
            <person name="Alexandrov N.A."/>
            <person name="Lu Y.-P."/>
            <person name="Flavell R.B."/>
            <person name="Feldmann K.A."/>
        </authorList>
    </citation>
    <scope>NUCLEOTIDE SEQUENCE [LARGE SCALE MRNA]</scope>
</reference>
<reference key="5">
    <citation type="journal article" date="2005" name="Plant J.">
        <title>Arabidopsis peroxisomes possess functionally redundant membrane and matrix isoforms of monodehydroascorbate reductase.</title>
        <authorList>
            <person name="Lisenbee C.S."/>
            <person name="Lingard M.J."/>
            <person name="Trelease R.N."/>
        </authorList>
    </citation>
    <scope>FUNCTION</scope>
    <scope>GENE FAMILY</scope>
    <scope>NOMENCLATURE</scope>
</reference>
<reference key="6">
    <citation type="journal article" date="2009" name="J. Plant Physiol.">
        <title>Monodehydroascorbate reductase 2 and dehydroascorbate reductase 5 are crucial for a mutualistic interaction between Piriformospora indica and Arabidopsis.</title>
        <authorList>
            <person name="Vadassery J."/>
            <person name="Tripathi S."/>
            <person name="Prasad R."/>
            <person name="Varma A."/>
            <person name="Oelmueller R."/>
        </authorList>
    </citation>
    <scope>FUNCTION</scope>
    <scope>INDUCTION</scope>
    <scope>DISRUPTION PHENOTYPE</scope>
</reference>
<sequence>MAEEKSYKYVIIGGGVAGGYAAREFSNQGLKPGELAIISKEPVPPFERPELTKVYIDLEVNPTLANIYVCAGTGEAKQYPNWYKEKGIDLIVGTEIVKADLASKTLVSDDGKIYKYQTLLIATGSTNIRLSEIGVQEADVKNIFYLREIEDSDELALAMELYVQRGKAVIIGGGFLGLEISSALRANNHEVTMVFPEPWLVHRFFTAEIASFYESYYANKGIKIIKGTVATGFSTNSDGEVTEVKLEDGRTLEANIVVAGVGARPATSLFKGQLEEEKGGIKTDGFFKTSVPDVYALGDVATFPMKMYGGTRRVEHADNARKSAAQAVKAIKAGEEGKTIPDYDYLPYFYSRFFKLSWEFYGENVGESVLFGDNDPKSPKPKFGTYWVKDGKVVGVFLEGGTQEEHKAIAKVARAQPSVESLDVLSEEGLSFATKFYSTSL</sequence>
<name>MDAR3_ARATH</name>
<feature type="chain" id="PRO_0000209136" description="Monodehydroascorbate reductase 3">
    <location>
        <begin position="1"/>
        <end position="441"/>
    </location>
</feature>
<feature type="binding site" evidence="1">
    <location>
        <begin position="14"/>
        <end position="17"/>
    </location>
    <ligand>
        <name>FAD</name>
        <dbReference type="ChEBI" id="CHEBI:57692"/>
    </ligand>
</feature>
<feature type="binding site" evidence="1">
    <location>
        <position position="41"/>
    </location>
    <ligand>
        <name>FAD</name>
        <dbReference type="ChEBI" id="CHEBI:57692"/>
    </ligand>
</feature>
<feature type="binding site" evidence="1">
    <location>
        <position position="48"/>
    </location>
    <ligand>
        <name>FAD</name>
        <dbReference type="ChEBI" id="CHEBI:57692"/>
    </ligand>
</feature>
<feature type="binding site" evidence="1">
    <location>
        <position position="53"/>
    </location>
    <ligand>
        <name>FAD</name>
        <dbReference type="ChEBI" id="CHEBI:57692"/>
    </ligand>
</feature>
<feature type="binding site" evidence="1">
    <location>
        <position position="96"/>
    </location>
    <ligand>
        <name>FAD</name>
        <dbReference type="ChEBI" id="CHEBI:57692"/>
    </ligand>
</feature>
<feature type="binding site" evidence="1">
    <location>
        <begin position="147"/>
        <end position="148"/>
    </location>
    <ligand>
        <name>FAD</name>
        <dbReference type="ChEBI" id="CHEBI:57692"/>
    </ligand>
</feature>
<feature type="binding site" evidence="1">
    <location>
        <begin position="173"/>
        <end position="179"/>
    </location>
    <ligand>
        <name>NAD(+)</name>
        <dbReference type="ChEBI" id="CHEBI:57540"/>
    </ligand>
</feature>
<feature type="binding site" evidence="1">
    <location>
        <begin position="175"/>
        <end position="179"/>
    </location>
    <ligand>
        <name>NADP(+)</name>
        <dbReference type="ChEBI" id="CHEBI:58349"/>
    </ligand>
</feature>
<feature type="binding site" evidence="1">
    <location>
        <position position="197"/>
    </location>
    <ligand>
        <name>NAD(+)</name>
        <dbReference type="ChEBI" id="CHEBI:57540"/>
    </ligand>
</feature>
<feature type="binding site" evidence="1">
    <location>
        <position position="203"/>
    </location>
    <ligand>
        <name>NAD(+)</name>
        <dbReference type="ChEBI" id="CHEBI:57540"/>
    </ligand>
</feature>
<feature type="binding site" evidence="1">
    <location>
        <position position="203"/>
    </location>
    <ligand>
        <name>NADP(+)</name>
        <dbReference type="ChEBI" id="CHEBI:58349"/>
    </ligand>
</feature>
<feature type="binding site" evidence="1">
    <location>
        <position position="262"/>
    </location>
    <ligand>
        <name>NAD(+)</name>
        <dbReference type="ChEBI" id="CHEBI:57540"/>
    </ligand>
</feature>
<feature type="binding site" evidence="1">
    <location>
        <position position="262"/>
    </location>
    <ligand>
        <name>NADP(+)</name>
        <dbReference type="ChEBI" id="CHEBI:58349"/>
    </ligand>
</feature>
<feature type="binding site" evidence="1">
    <location>
        <position position="299"/>
    </location>
    <ligand>
        <name>FAD</name>
        <dbReference type="ChEBI" id="CHEBI:57692"/>
    </ligand>
</feature>
<feature type="binding site" evidence="1">
    <location>
        <begin position="315"/>
        <end position="316"/>
    </location>
    <ligand>
        <name>NAD(+)</name>
        <dbReference type="ChEBI" id="CHEBI:57540"/>
    </ligand>
</feature>
<feature type="binding site" evidence="1">
    <location>
        <begin position="315"/>
        <end position="316"/>
    </location>
    <ligand>
        <name>NADP(+)</name>
        <dbReference type="ChEBI" id="CHEBI:58349"/>
    </ligand>
</feature>
<feature type="binding site" evidence="1">
    <location>
        <position position="321"/>
    </location>
    <ligand>
        <name>L-ascorbate</name>
        <dbReference type="ChEBI" id="CHEBI:38290"/>
    </ligand>
</feature>
<feature type="binding site" evidence="1">
    <location>
        <position position="350"/>
    </location>
    <ligand>
        <name>FAD</name>
        <dbReference type="ChEBI" id="CHEBI:57692"/>
    </ligand>
</feature>
<feature type="binding site" evidence="1">
    <location>
        <position position="350"/>
    </location>
    <ligand>
        <name>NAD(+)</name>
        <dbReference type="ChEBI" id="CHEBI:57540"/>
    </ligand>
</feature>
<feature type="binding site" evidence="1">
    <location>
        <position position="350"/>
    </location>
    <ligand>
        <name>NADP(+)</name>
        <dbReference type="ChEBI" id="CHEBI:58349"/>
    </ligand>
</feature>
<feature type="binding site" evidence="1">
    <location>
        <position position="352"/>
    </location>
    <ligand>
        <name>L-ascorbate</name>
        <dbReference type="ChEBI" id="CHEBI:38290"/>
    </ligand>
</feature>
<feature type="modified residue" description="Phosphoserine" evidence="2">
    <location>
        <position position="418"/>
    </location>
</feature>
<protein>
    <recommendedName>
        <fullName evidence="6">Monodehydroascorbate reductase 3</fullName>
        <shortName evidence="6">AtMDAR3</shortName>
        <ecNumber evidence="8">1.6.5.4</ecNumber>
    </recommendedName>
</protein>
<gene>
    <name evidence="6" type="primary">MDAR3</name>
    <name evidence="7" type="synonym">MDAR2</name>
    <name evidence="9" type="ordered locus">At3g09940</name>
    <name evidence="10" type="ORF">T22K18.25</name>
</gene>
<proteinExistence type="evidence at transcript level"/>
<comment type="function">
    <text evidence="4 5">Catalyzes the conversion of monodehydroascorbate to ascorbate, oxidizing NADH in the process (PubMed:16146528). Required for producing sufficient ascorbate to maintain the interaction between Piriformospora indica and Arabidopsis in a mutualistic state (PubMed:19386380).</text>
</comment>
<comment type="catalytic activity">
    <reaction evidence="8">
        <text>2 monodehydro-L-ascorbate radical + NADH + H(+) = 2 L-ascorbate + NAD(+)</text>
        <dbReference type="Rhea" id="RHEA:14581"/>
        <dbReference type="ChEBI" id="CHEBI:15378"/>
        <dbReference type="ChEBI" id="CHEBI:38290"/>
        <dbReference type="ChEBI" id="CHEBI:57540"/>
        <dbReference type="ChEBI" id="CHEBI:57945"/>
        <dbReference type="ChEBI" id="CHEBI:59513"/>
        <dbReference type="EC" id="1.6.5.4"/>
    </reaction>
</comment>
<comment type="cofactor">
    <cofactor evidence="3">
        <name>FAD</name>
        <dbReference type="ChEBI" id="CHEBI:57692"/>
    </cofactor>
</comment>
<comment type="subcellular location">
    <subcellularLocation>
        <location evidence="8">Cytoplasm</location>
    </subcellularLocation>
</comment>
<comment type="alternative products">
    <event type="alternative splicing"/>
    <isoform>
        <id>Q9SR59-1</id>
        <name>1</name>
        <sequence type="displayed"/>
    </isoform>
    <text>A number of isoforms are produced. According to EST sequences.</text>
</comment>
<comment type="induction">
    <text evidence="5">Up-regulated by drought stress and in roots colonized by the beneficial endophytic fungus Piriformospora indica.</text>
</comment>
<comment type="disruption phenotype">
    <text evidence="5">Loss of growth and seed production promotion by Piriformospora indica.</text>
</comment>
<comment type="similarity">
    <text evidence="8">Belongs to the FAD-dependent oxidoreductase family.</text>
</comment>
<evidence type="ECO:0000250" key="1">
    <source>
        <dbReference type="UniProtKB" id="Q652L6"/>
    </source>
</evidence>
<evidence type="ECO:0000250" key="2">
    <source>
        <dbReference type="UniProtKB" id="Q9LFA3"/>
    </source>
</evidence>
<evidence type="ECO:0000250" key="3">
    <source>
        <dbReference type="UniProtKB" id="Q9S926"/>
    </source>
</evidence>
<evidence type="ECO:0000269" key="4">
    <source>
    </source>
</evidence>
<evidence type="ECO:0000269" key="5">
    <source>
    </source>
</evidence>
<evidence type="ECO:0000303" key="6">
    <source>
    </source>
</evidence>
<evidence type="ECO:0000303" key="7">
    <source>
    </source>
</evidence>
<evidence type="ECO:0000305" key="8"/>
<evidence type="ECO:0000312" key="9">
    <source>
        <dbReference type="Araport" id="AT3G09940"/>
    </source>
</evidence>
<evidence type="ECO:0000312" key="10">
    <source>
        <dbReference type="EMBL" id="AAF04429.1"/>
    </source>
</evidence>
<accession>Q9SR59</accession>
<organism>
    <name type="scientific">Arabidopsis thaliana</name>
    <name type="common">Mouse-ear cress</name>
    <dbReference type="NCBI Taxonomy" id="3702"/>
    <lineage>
        <taxon>Eukaryota</taxon>
        <taxon>Viridiplantae</taxon>
        <taxon>Streptophyta</taxon>
        <taxon>Embryophyta</taxon>
        <taxon>Tracheophyta</taxon>
        <taxon>Spermatophyta</taxon>
        <taxon>Magnoliopsida</taxon>
        <taxon>eudicotyledons</taxon>
        <taxon>Gunneridae</taxon>
        <taxon>Pentapetalae</taxon>
        <taxon>rosids</taxon>
        <taxon>malvids</taxon>
        <taxon>Brassicales</taxon>
        <taxon>Brassicaceae</taxon>
        <taxon>Camelineae</taxon>
        <taxon>Arabidopsis</taxon>
    </lineage>
</organism>